<comment type="function">
    <text evidence="1">Responsible for synthesis of pseudouridine from uracil-55 in the psi GC loop of transfer RNAs.</text>
</comment>
<comment type="catalytic activity">
    <reaction evidence="1">
        <text>uridine(55) in tRNA = pseudouridine(55) in tRNA</text>
        <dbReference type="Rhea" id="RHEA:42532"/>
        <dbReference type="Rhea" id="RHEA-COMP:10101"/>
        <dbReference type="Rhea" id="RHEA-COMP:10102"/>
        <dbReference type="ChEBI" id="CHEBI:65314"/>
        <dbReference type="ChEBI" id="CHEBI:65315"/>
        <dbReference type="EC" id="5.4.99.25"/>
    </reaction>
</comment>
<comment type="similarity">
    <text evidence="1">Belongs to the pseudouridine synthase TruB family. Type 1 subfamily.</text>
</comment>
<dbReference type="EC" id="5.4.99.25" evidence="1"/>
<dbReference type="EMBL" id="CP000679">
    <property type="protein sequence ID" value="ABP67652.1"/>
    <property type="molecule type" value="Genomic_DNA"/>
</dbReference>
<dbReference type="RefSeq" id="WP_011917587.1">
    <property type="nucleotide sequence ID" value="NC_009437.1"/>
</dbReference>
<dbReference type="SMR" id="A4XL67"/>
<dbReference type="STRING" id="351627.Csac_2067"/>
<dbReference type="KEGG" id="csc:Csac_2067"/>
<dbReference type="eggNOG" id="COG0130">
    <property type="taxonomic scope" value="Bacteria"/>
</dbReference>
<dbReference type="HOGENOM" id="CLU_032087_0_2_9"/>
<dbReference type="OrthoDB" id="9802309at2"/>
<dbReference type="Proteomes" id="UP000000256">
    <property type="component" value="Chromosome"/>
</dbReference>
<dbReference type="GO" id="GO:0003723">
    <property type="term" value="F:RNA binding"/>
    <property type="evidence" value="ECO:0007669"/>
    <property type="project" value="InterPro"/>
</dbReference>
<dbReference type="GO" id="GO:0160148">
    <property type="term" value="F:tRNA pseudouridine(55) synthase activity"/>
    <property type="evidence" value="ECO:0007669"/>
    <property type="project" value="UniProtKB-EC"/>
</dbReference>
<dbReference type="GO" id="GO:1990481">
    <property type="term" value="P:mRNA pseudouridine synthesis"/>
    <property type="evidence" value="ECO:0007669"/>
    <property type="project" value="TreeGrafter"/>
</dbReference>
<dbReference type="GO" id="GO:0031119">
    <property type="term" value="P:tRNA pseudouridine synthesis"/>
    <property type="evidence" value="ECO:0007669"/>
    <property type="project" value="UniProtKB-UniRule"/>
</dbReference>
<dbReference type="CDD" id="cd02573">
    <property type="entry name" value="PseudoU_synth_EcTruB"/>
    <property type="match status" value="1"/>
</dbReference>
<dbReference type="Gene3D" id="3.30.2350.10">
    <property type="entry name" value="Pseudouridine synthase"/>
    <property type="match status" value="1"/>
</dbReference>
<dbReference type="HAMAP" id="MF_01080">
    <property type="entry name" value="TruB_bact"/>
    <property type="match status" value="1"/>
</dbReference>
<dbReference type="InterPro" id="IPR020103">
    <property type="entry name" value="PsdUridine_synth_cat_dom_sf"/>
</dbReference>
<dbReference type="InterPro" id="IPR002501">
    <property type="entry name" value="PsdUridine_synth_N"/>
</dbReference>
<dbReference type="InterPro" id="IPR014780">
    <property type="entry name" value="tRNA_psdUridine_synth_TruB"/>
</dbReference>
<dbReference type="NCBIfam" id="TIGR00431">
    <property type="entry name" value="TruB"/>
    <property type="match status" value="1"/>
</dbReference>
<dbReference type="PANTHER" id="PTHR13767:SF2">
    <property type="entry name" value="PSEUDOURIDYLATE SYNTHASE TRUB1"/>
    <property type="match status" value="1"/>
</dbReference>
<dbReference type="PANTHER" id="PTHR13767">
    <property type="entry name" value="TRNA-PSEUDOURIDINE SYNTHASE"/>
    <property type="match status" value="1"/>
</dbReference>
<dbReference type="Pfam" id="PF01509">
    <property type="entry name" value="TruB_N"/>
    <property type="match status" value="1"/>
</dbReference>
<dbReference type="SUPFAM" id="SSF55120">
    <property type="entry name" value="Pseudouridine synthase"/>
    <property type="match status" value="1"/>
</dbReference>
<name>TRUB_CALS8</name>
<feature type="chain" id="PRO_1000084561" description="tRNA pseudouridine synthase B">
    <location>
        <begin position="1"/>
        <end position="287"/>
    </location>
</feature>
<feature type="active site" description="Nucleophile" evidence="1">
    <location>
        <position position="37"/>
    </location>
</feature>
<keyword id="KW-0413">Isomerase</keyword>
<keyword id="KW-0819">tRNA processing</keyword>
<proteinExistence type="inferred from homology"/>
<evidence type="ECO:0000255" key="1">
    <source>
        <dbReference type="HAMAP-Rule" id="MF_01080"/>
    </source>
</evidence>
<gene>
    <name evidence="1" type="primary">truB</name>
    <name type="ordered locus">Csac_2067</name>
</gene>
<sequence length="287" mass="32938">MNGILLVDKPVGLTSHDVVEYVRKLFKTKVGHCGTLDPFASGLLVLLIGEATKLSSFFTQTKKTYIATMQFGIKTDTLDITGKVQLRNNIFIEQNEIEDCLKDLKGEVELSVPIYSAKKVKGRKLYEYAREGIDIEIPKIKSIIYSIEMINYCYPYMTFKVECSHGTYIRSLAEEIAKKLSTVATLVQLRRAKNGVFDIKAAFSLDFISEDSIIPLENLILNEIIVNESVYKKLINGNPLTRKDIKEIRLNDSLFEDFYKISMKDAFFVYKREGDKFKYLLKVENYR</sequence>
<organism>
    <name type="scientific">Caldicellulosiruptor saccharolyticus (strain ATCC 43494 / DSM 8903 / Tp8T 6331)</name>
    <dbReference type="NCBI Taxonomy" id="351627"/>
    <lineage>
        <taxon>Bacteria</taxon>
        <taxon>Bacillati</taxon>
        <taxon>Bacillota</taxon>
        <taxon>Bacillota incertae sedis</taxon>
        <taxon>Caldicellulosiruptorales</taxon>
        <taxon>Caldicellulosiruptoraceae</taxon>
        <taxon>Caldicellulosiruptor</taxon>
    </lineage>
</organism>
<protein>
    <recommendedName>
        <fullName evidence="1">tRNA pseudouridine synthase B</fullName>
        <ecNumber evidence="1">5.4.99.25</ecNumber>
    </recommendedName>
    <alternativeName>
        <fullName evidence="1">tRNA pseudouridine(55) synthase</fullName>
        <shortName evidence="1">Psi55 synthase</shortName>
    </alternativeName>
    <alternativeName>
        <fullName evidence="1">tRNA pseudouridylate synthase</fullName>
    </alternativeName>
    <alternativeName>
        <fullName evidence="1">tRNA-uridine isomerase</fullName>
    </alternativeName>
</protein>
<reference key="1">
    <citation type="submission" date="2007-04" db="EMBL/GenBank/DDBJ databases">
        <title>Genome sequence of the thermophilic hydrogen-producing bacterium Caldicellulosiruptor saccharolyticus DSM 8903.</title>
        <authorList>
            <person name="Copeland A."/>
            <person name="Lucas S."/>
            <person name="Lapidus A."/>
            <person name="Barry K."/>
            <person name="Detter J.C."/>
            <person name="Glavina del Rio T."/>
            <person name="Hammon N."/>
            <person name="Israni S."/>
            <person name="Dalin E."/>
            <person name="Tice H."/>
            <person name="Pitluck S."/>
            <person name="Kiss H."/>
            <person name="Brettin T."/>
            <person name="Bruce D."/>
            <person name="Han C."/>
            <person name="Schmutz J."/>
            <person name="Larimer F."/>
            <person name="Land M."/>
            <person name="Hauser L."/>
            <person name="Kyrpides N."/>
            <person name="Lykidis A."/>
            <person name="van de Werken H.J.G."/>
            <person name="Verhaart M.R.A."/>
            <person name="VanFossen A.L."/>
            <person name="Lewis D.L."/>
            <person name="Nichols J.D."/>
            <person name="Goorissen H.P."/>
            <person name="van Niel E.W.J."/>
            <person name="Stams F.J.M."/>
            <person name="Willquist K.U."/>
            <person name="Ward D.E."/>
            <person name="van der Oost J."/>
            <person name="Kelly R.M."/>
            <person name="Kengen S.M.W."/>
            <person name="Richardson P."/>
        </authorList>
    </citation>
    <scope>NUCLEOTIDE SEQUENCE [LARGE SCALE GENOMIC DNA]</scope>
    <source>
        <strain>ATCC 43494 / DSM 8903 / Tp8T 6331</strain>
    </source>
</reference>
<accession>A4XL67</accession>